<proteinExistence type="evidence at transcript level"/>
<organism evidence="10">
    <name type="scientific">Toxoplasma gondii (strain ATCC 50861 / VEG)</name>
    <dbReference type="NCBI Taxonomy" id="432359"/>
    <lineage>
        <taxon>Eukaryota</taxon>
        <taxon>Sar</taxon>
        <taxon>Alveolata</taxon>
        <taxon>Apicomplexa</taxon>
        <taxon>Conoidasida</taxon>
        <taxon>Coccidia</taxon>
        <taxon>Eucoccidiorida</taxon>
        <taxon>Eimeriorina</taxon>
        <taxon>Sarcocystidae</taxon>
        <taxon>Toxoplasma</taxon>
    </lineage>
</organism>
<keyword id="KW-1003">Cell membrane</keyword>
<keyword id="KW-0968">Cytoplasmic vesicle</keyword>
<keyword id="KW-0472">Membrane</keyword>
<keyword id="KW-0592">Phosphate transport</keyword>
<keyword id="KW-1185">Reference proteome</keyword>
<keyword id="KW-0769">Symport</keyword>
<keyword id="KW-0812">Transmembrane</keyword>
<keyword id="KW-1133">Transmembrane helix</keyword>
<keyword id="KW-0813">Transport</keyword>
<keyword id="KW-0926">Vacuole</keyword>
<comment type="function">
    <text evidence="3 4">Sodium-phosphate symporter which preferentially transports the monovalent form of phosphate with a stoichiometry of two sodium ions per phosphate ion (PubMed:33383579, PubMed:36094254). Plays a role in stabilizing the cytosolic pH and osmoregulation (PubMed:33383579). May be required for optimal virulence of parasites in vivo (PubMed:33383579).</text>
</comment>
<comment type="catalytic activity">
    <reaction evidence="3 4">
        <text>2 Na(+)(out) + phosphate(out) = 2 Na(+)(in) + phosphate(in)</text>
        <dbReference type="Rhea" id="RHEA:71259"/>
        <dbReference type="ChEBI" id="CHEBI:29101"/>
        <dbReference type="ChEBI" id="CHEBI:43474"/>
    </reaction>
    <physiologicalReaction direction="left-to-right" evidence="7">
        <dbReference type="Rhea" id="RHEA:71260"/>
    </physiologicalReaction>
</comment>
<comment type="subcellular location">
    <subcellularLocation>
        <location evidence="3 4">Cell membrane</location>
        <topology evidence="1">Multi-pass membrane protein</topology>
    </subcellularLocation>
    <subcellularLocation>
        <location evidence="3">Vacuole membrane</location>
        <topology evidence="1">Multi-pass membrane protein</topology>
    </subcellularLocation>
    <subcellularLocation>
        <location evidence="3 4">Cytoplasmic vesicle membrane</location>
        <topology evidence="1">Multi-pass membrane protein</topology>
    </subcellularLocation>
    <text evidence="3">Under low phosphate condition, exported to the plasma membrane.</text>
</comment>
<comment type="induction">
    <text evidence="3">No significant changes in expression observed in phosphate-starved parasites.</text>
</comment>
<comment type="disruption phenotype">
    <text evidence="3 4">Reduced uptake of inorganic phosphate by the mutant parasites (PubMed:33383579, PubMed:36094254). Reduced polyphosphate synthesis (PubMed:33383579). Accumulation of acidocalcisomes, organelles for calcium and phosphate storage (PubMed:33383579). Aberrant morphology, reduced cell volume and abnormally dilated vacuolar compartment (PubMed:33383579). Mild alkalinization of the cytosol (PubMed:33383579). Changes in expression of multiple genes involved in various metabolic pathways, including enzymes that cleave or transfer phosphate groups from phosphometabolites and transporters that localize to vacuolar compartment or acidocalcisomes (PubMed:33383579). Delayed replication (PubMed:33383579). Reduced virulence in mice (PubMed:33383579). In contrast, another study reports that PIT is dispensable for growth and virulence (PubMed:36094254).</text>
</comment>
<comment type="similarity">
    <text evidence="7">Belongs to the inorganic phosphate transporter (PiT) (TC 2.A.20) family.</text>
</comment>
<comment type="caution">
    <text evidence="3 4">Contradicting results from knockout studies (PubMed:33383579, PubMed:36094254). One study reports delayed replication and reduced virulence in mice (PubMed:33383579). However, another study reports that PIT is dispensable for growth and virulence (PubMed:36094254).</text>
</comment>
<name>PIT_TOXGV</name>
<sequence>MEAVAELSAPSLAGAPGEYTWIVAVAGVTCFLTAFAIGANDVANTFSSSVGSRAIPLWAAIGMSAVLETVGATLLGGAVTDSIRSKIIDFEVFRETPSILMTGMLCALVGAGLWLFLANHLGLPVSTTHSIIGALLGFGLASGNVRAVKWTQVAFIVGSWVAAPLAASAAGATIFVCMRRLILRSRQPLRRAKRFLWIFIYLITLTFSVFLVFKNFFELNVSCDQMVAGGRVEHFEPCRISRWADAHSGTALGIAVALSVALTFVISCLVYRFAFYRVESYRRRQKRSSRTEPRDASEEGTGPSHARPGGLLLTPRSCVAKEGERRPGALEDALRLAGEENARIASAESRLQKPPPLECMDTCADSLQINDGRAAAAKPDVGTAAQSPESRFAADPVGSSVPDRSVLAFSRSLAEDAQAAFHASVQHCASPRCSAASRGDSRYPLQRSTSDFSAFLSSPSSSVPPSSPSPSSTPSSPSASPRRPPSRPPVPRTCSPAPVSPSVPRAFASTATHGHPPALSDTDADTPEGPDRRRQSAALAGAKDAEASPLFADLAPHPERRDEVPAAKRERDARRTLLLPPRVTGEAPEGFFAPTVSHDDNGLVFVSQADLADSLGSGVDEEEDAPRSWRGKLKAAWRSMPWFKDIHAEGSTEDDLVARLQTGAEVFDTETELFFSACQVVSACMGCIAHSANDTANAIGPFAAILTVYQSGSADSEIGSPWYILLFGGLSMSLGLALLGYRVIKTVGVKLVKITPARGFSMELGAAWTVLIFSAIGIPLSTTHCAVGSTVGVGLMEPKHPRRETGDGPVAEGEEPKKRAVQCPVINTASVNWKLFGGVFVSWIITIAFSALVTAALFSFAAYSPRMVS</sequence>
<evidence type="ECO:0000255" key="1"/>
<evidence type="ECO:0000256" key="2">
    <source>
        <dbReference type="SAM" id="MobiDB-lite"/>
    </source>
</evidence>
<evidence type="ECO:0000269" key="3">
    <source>
    </source>
</evidence>
<evidence type="ECO:0000269" key="4">
    <source>
    </source>
</evidence>
<evidence type="ECO:0000303" key="5">
    <source>
    </source>
</evidence>
<evidence type="ECO:0000303" key="6">
    <source>
    </source>
</evidence>
<evidence type="ECO:0000305" key="7"/>
<evidence type="ECO:0000312" key="8">
    <source>
        <dbReference type="EMBL" id="CEL73364.1"/>
    </source>
</evidence>
<evidence type="ECO:0000312" key="9">
    <source>
        <dbReference type="EMBL" id="ESS31407.1"/>
    </source>
</evidence>
<evidence type="ECO:0000312" key="10">
    <source>
        <dbReference type="Proteomes" id="UP000002226"/>
    </source>
</evidence>
<feature type="chain" id="PRO_0000459733" description="Sodium-dependent phosphate transporter">
    <location>
        <begin position="1"/>
        <end position="869"/>
    </location>
</feature>
<feature type="topological domain" description="Extracellular" evidence="7">
    <location>
        <begin position="1"/>
        <end position="18"/>
    </location>
</feature>
<feature type="transmembrane region" description="Helical" evidence="1">
    <location>
        <begin position="19"/>
        <end position="39"/>
    </location>
</feature>
<feature type="topological domain" description="Cytoplasmic" evidence="7">
    <location>
        <begin position="40"/>
        <end position="54"/>
    </location>
</feature>
<feature type="transmembrane region" description="Helical" evidence="1">
    <location>
        <begin position="55"/>
        <end position="75"/>
    </location>
</feature>
<feature type="topological domain" description="Extracellular" evidence="7">
    <location>
        <begin position="76"/>
        <end position="97"/>
    </location>
</feature>
<feature type="transmembrane region" description="Helical" evidence="1">
    <location>
        <begin position="98"/>
        <end position="118"/>
    </location>
</feature>
<feature type="topological domain" description="Cytoplasmic" evidence="7">
    <location>
        <begin position="119"/>
        <end position="120"/>
    </location>
</feature>
<feature type="transmembrane region" description="Helical" evidence="1">
    <location>
        <begin position="121"/>
        <end position="141"/>
    </location>
</feature>
<feature type="topological domain" description="Extracellular" evidence="7">
    <location>
        <begin position="142"/>
        <end position="154"/>
    </location>
</feature>
<feature type="transmembrane region" description="Helical" evidence="1">
    <location>
        <begin position="155"/>
        <end position="175"/>
    </location>
</feature>
<feature type="topological domain" description="Cytoplasmic" evidence="7">
    <location>
        <begin position="176"/>
        <end position="196"/>
    </location>
</feature>
<feature type="transmembrane region" description="Helical" evidence="1">
    <location>
        <begin position="197"/>
        <end position="217"/>
    </location>
</feature>
<feature type="topological domain" description="Extracellular" evidence="7">
    <location>
        <begin position="218"/>
        <end position="250"/>
    </location>
</feature>
<feature type="transmembrane region" description="Helical" evidence="1">
    <location>
        <begin position="251"/>
        <end position="271"/>
    </location>
</feature>
<feature type="topological domain" description="Cytoplasmic" evidence="7">
    <location>
        <begin position="272"/>
        <end position="720"/>
    </location>
</feature>
<feature type="transmembrane region" description="Helical" evidence="1">
    <location>
        <begin position="721"/>
        <end position="741"/>
    </location>
</feature>
<feature type="topological domain" description="Extracellular" evidence="7">
    <location>
        <begin position="742"/>
        <end position="759"/>
    </location>
</feature>
<feature type="transmembrane region" description="Helical" evidence="1">
    <location>
        <begin position="760"/>
        <end position="780"/>
    </location>
</feature>
<feature type="topological domain" description="Cytoplasmic" evidence="7">
    <location>
        <begin position="781"/>
        <end position="837"/>
    </location>
</feature>
<feature type="transmembrane region" description="Helical" evidence="1">
    <location>
        <begin position="838"/>
        <end position="858"/>
    </location>
</feature>
<feature type="topological domain" description="Extracellular" evidence="7">
    <location>
        <begin position="859"/>
        <end position="869"/>
    </location>
</feature>
<feature type="region of interest" description="Disordered" evidence="2">
    <location>
        <begin position="286"/>
        <end position="312"/>
    </location>
</feature>
<feature type="region of interest" description="Disordered" evidence="2">
    <location>
        <begin position="374"/>
        <end position="401"/>
    </location>
</feature>
<feature type="region of interest" description="Disordered" evidence="2">
    <location>
        <begin position="453"/>
        <end position="571"/>
    </location>
</feature>
<feature type="compositionally biased region" description="Low complexity" evidence="2">
    <location>
        <begin position="457"/>
        <end position="481"/>
    </location>
</feature>
<feature type="compositionally biased region" description="Pro residues" evidence="2">
    <location>
        <begin position="482"/>
        <end position="491"/>
    </location>
</feature>
<feature type="compositionally biased region" description="Low complexity" evidence="2">
    <location>
        <begin position="492"/>
        <end position="509"/>
    </location>
</feature>
<feature type="compositionally biased region" description="Basic and acidic residues" evidence="2">
    <location>
        <begin position="556"/>
        <end position="571"/>
    </location>
</feature>
<reference evidence="8" key="1">
    <citation type="journal article" date="2015" name="PLoS ONE">
        <title>Comprehensive Evaluation of Toxoplasma gondii VEG and Neospora caninum LIV Genomes with Tachyzoite Stage Transcriptome and Proteome Defines Novel Transcript Features.</title>
        <authorList>
            <person name="Ramaprasad A."/>
            <person name="Mourier T."/>
            <person name="Naeem R."/>
            <person name="Malas T.B."/>
            <person name="Moussa E."/>
            <person name="Panigrahi A."/>
            <person name="Vermont S.J."/>
            <person name="Otto T.D."/>
            <person name="Wastling J."/>
            <person name="Pain A."/>
        </authorList>
    </citation>
    <scope>NUCLEOTIDE SEQUENCE [LARGE SCALE GENOMIC DNA]</scope>
    <source>
        <strain evidence="8">ATCC 50861 / VEG</strain>
    </source>
</reference>
<reference evidence="10" key="2">
    <citation type="submission" date="2008-03" db="EMBL/GenBank/DDBJ databases">
        <title>Annotation of Toxoplasma gondii VEG.</title>
        <authorList>
            <person name="Lorenzi H."/>
            <person name="Inman J."/>
            <person name="Amedeo P."/>
            <person name="Brunk B."/>
            <person name="Roos D."/>
            <person name="Caler E."/>
        </authorList>
    </citation>
    <scope>NUCLEOTIDE SEQUENCE [LARGE SCALE GENOMIC DNA]</scope>
    <source>
        <strain evidence="10">ATCC 50861 / VEG</strain>
    </source>
</reference>
<reference evidence="7" key="3">
    <citation type="journal article" date="2020" name="PLoS Pathog.">
        <title>A single Na+-Pi cotransporter in Toxoplasma plays key roles in phosphate import and control of parasite osmoregulation.</title>
        <authorList>
            <person name="Asady B."/>
            <person name="Dick C.F."/>
            <person name="Ehrenman K."/>
            <person name="Sahu T."/>
            <person name="Romano J.D."/>
            <person name="Coppens I."/>
        </authorList>
    </citation>
    <scope>FUNCTION</scope>
    <scope>TRANSPORTER ACTIVITY</scope>
    <scope>SUBCELLULAR LOCATION</scope>
    <scope>INDUCTION</scope>
    <scope>DISRUPTION PHENOTYPE</scope>
    <source>
        <strain evidence="5">RH</strain>
    </source>
</reference>
<reference evidence="7" key="4">
    <citation type="journal article" date="2022" name="Microbiol. Spectr.">
        <title>A Coccidia-Specific Phosphate Transporter Is Essential for the Growth of Toxoplasma gondii Parasites.</title>
        <authorList>
            <person name="Cui J."/>
            <person name="Yang X."/>
            <person name="Yang J."/>
            <person name="Jia R."/>
            <person name="Feng Y."/>
            <person name="Shen B."/>
        </authorList>
    </citation>
    <scope>FUNCTION</scope>
    <scope>TRANSPORTER ACTIVITY</scope>
    <scope>SUBCELLULAR LOCATION</scope>
    <scope>DISRUPTION PHENOTYPE</scope>
    <source>
        <strain evidence="6">RH</strain>
    </source>
</reference>
<protein>
    <recommendedName>
        <fullName evidence="7">Sodium-dependent phosphate transporter</fullName>
        <shortName evidence="5 6">TgPiT</shortName>
    </recommendedName>
</protein>
<dbReference type="EMBL" id="LN714495">
    <property type="protein sequence ID" value="CEL73364.1"/>
    <property type="molecule type" value="Genomic_DNA"/>
</dbReference>
<dbReference type="EMBL" id="AAYL02000188">
    <property type="protein sequence ID" value="ESS31407.1"/>
    <property type="molecule type" value="Genomic_DNA"/>
</dbReference>
<dbReference type="STRING" id="432359.B6KFA9"/>
<dbReference type="PaxDb" id="5811-TGME49_040210"/>
<dbReference type="EnsemblProtists" id="ESS31407">
    <property type="protein sequence ID" value="ESS31407"/>
    <property type="gene ID" value="TGVEG_240210"/>
</dbReference>
<dbReference type="VEuPathDB" id="ToxoDB:TGVEG_240210"/>
<dbReference type="eggNOG" id="KOG2493">
    <property type="taxonomic scope" value="Eukaryota"/>
</dbReference>
<dbReference type="OMA" id="MQAFCIA"/>
<dbReference type="OrthoDB" id="2511at5809"/>
<dbReference type="Proteomes" id="UP000002226">
    <property type="component" value="Partially assembled WGS sequence"/>
</dbReference>
<dbReference type="GO" id="GO:0030659">
    <property type="term" value="C:cytoplasmic vesicle membrane"/>
    <property type="evidence" value="ECO:0007669"/>
    <property type="project" value="UniProtKB-SubCell"/>
</dbReference>
<dbReference type="GO" id="GO:0005886">
    <property type="term" value="C:plasma membrane"/>
    <property type="evidence" value="ECO:0007669"/>
    <property type="project" value="UniProtKB-SubCell"/>
</dbReference>
<dbReference type="GO" id="GO:0005774">
    <property type="term" value="C:vacuolar membrane"/>
    <property type="evidence" value="ECO:0007669"/>
    <property type="project" value="UniProtKB-SubCell"/>
</dbReference>
<dbReference type="GO" id="GO:0005315">
    <property type="term" value="F:phosphate transmembrane transporter activity"/>
    <property type="evidence" value="ECO:0007669"/>
    <property type="project" value="InterPro"/>
</dbReference>
<dbReference type="GO" id="GO:0015293">
    <property type="term" value="F:symporter activity"/>
    <property type="evidence" value="ECO:0007669"/>
    <property type="project" value="UniProtKB-KW"/>
</dbReference>
<dbReference type="GO" id="GO:0035435">
    <property type="term" value="P:phosphate ion transmembrane transport"/>
    <property type="evidence" value="ECO:0007669"/>
    <property type="project" value="TreeGrafter"/>
</dbReference>
<dbReference type="InterPro" id="IPR001204">
    <property type="entry name" value="Phos_transporter"/>
</dbReference>
<dbReference type="PANTHER" id="PTHR11101">
    <property type="entry name" value="PHOSPHATE TRANSPORTER"/>
    <property type="match status" value="1"/>
</dbReference>
<dbReference type="PANTHER" id="PTHR11101:SF80">
    <property type="entry name" value="PHOSPHATE TRANSPORTER"/>
    <property type="match status" value="1"/>
</dbReference>
<dbReference type="Pfam" id="PF01384">
    <property type="entry name" value="PHO4"/>
    <property type="match status" value="1"/>
</dbReference>
<accession>B6KFA9</accession>
<accession>A0A0F7UWG0</accession>
<accession>B9QK73</accession>
<accession>S8GFY6</accession>
<gene>
    <name evidence="7" type="primary">PIT</name>
    <name evidence="8" type="ORF">BN1205_091360</name>
    <name evidence="9" type="ORF">TGVEG_240210</name>
</gene>